<organism>
    <name type="scientific">Streptomyces griseus subsp. griseus (strain JCM 4626 / CBS 651.72 / NBRC 13350 / KCC S-0626 / ISP 5235)</name>
    <dbReference type="NCBI Taxonomy" id="455632"/>
    <lineage>
        <taxon>Bacteria</taxon>
        <taxon>Bacillati</taxon>
        <taxon>Actinomycetota</taxon>
        <taxon>Actinomycetes</taxon>
        <taxon>Kitasatosporales</taxon>
        <taxon>Streptomycetaceae</taxon>
        <taxon>Streptomyces</taxon>
    </lineage>
</organism>
<name>PGK_STRGG</name>
<feature type="chain" id="PRO_1000096379" description="Phosphoglycerate kinase">
    <location>
        <begin position="1"/>
        <end position="403"/>
    </location>
</feature>
<feature type="binding site" evidence="1">
    <location>
        <begin position="22"/>
        <end position="24"/>
    </location>
    <ligand>
        <name>substrate</name>
    </ligand>
</feature>
<feature type="binding site" evidence="1">
    <location>
        <position position="37"/>
    </location>
    <ligand>
        <name>substrate</name>
    </ligand>
</feature>
<feature type="binding site" evidence="1">
    <location>
        <begin position="60"/>
        <end position="63"/>
    </location>
    <ligand>
        <name>substrate</name>
    </ligand>
</feature>
<feature type="binding site" evidence="1">
    <location>
        <position position="119"/>
    </location>
    <ligand>
        <name>substrate</name>
    </ligand>
</feature>
<feature type="binding site" evidence="1">
    <location>
        <position position="156"/>
    </location>
    <ligand>
        <name>substrate</name>
    </ligand>
</feature>
<feature type="binding site" evidence="1">
    <location>
        <position position="206"/>
    </location>
    <ligand>
        <name>ATP</name>
        <dbReference type="ChEBI" id="CHEBI:30616"/>
    </ligand>
</feature>
<feature type="binding site" evidence="1">
    <location>
        <position position="302"/>
    </location>
    <ligand>
        <name>ATP</name>
        <dbReference type="ChEBI" id="CHEBI:30616"/>
    </ligand>
</feature>
<feature type="binding site" evidence="1">
    <location>
        <position position="333"/>
    </location>
    <ligand>
        <name>ATP</name>
        <dbReference type="ChEBI" id="CHEBI:30616"/>
    </ligand>
</feature>
<feature type="binding site" evidence="1">
    <location>
        <begin position="359"/>
        <end position="362"/>
    </location>
    <ligand>
        <name>ATP</name>
        <dbReference type="ChEBI" id="CHEBI:30616"/>
    </ligand>
</feature>
<accession>B1W0Z3</accession>
<comment type="catalytic activity">
    <reaction evidence="1">
        <text>(2R)-3-phosphoglycerate + ATP = (2R)-3-phospho-glyceroyl phosphate + ADP</text>
        <dbReference type="Rhea" id="RHEA:14801"/>
        <dbReference type="ChEBI" id="CHEBI:30616"/>
        <dbReference type="ChEBI" id="CHEBI:57604"/>
        <dbReference type="ChEBI" id="CHEBI:58272"/>
        <dbReference type="ChEBI" id="CHEBI:456216"/>
        <dbReference type="EC" id="2.7.2.3"/>
    </reaction>
</comment>
<comment type="pathway">
    <text evidence="1">Carbohydrate degradation; glycolysis; pyruvate from D-glyceraldehyde 3-phosphate: step 2/5.</text>
</comment>
<comment type="subunit">
    <text evidence="1">Monomer.</text>
</comment>
<comment type="subcellular location">
    <subcellularLocation>
        <location evidence="1">Cytoplasm</location>
    </subcellularLocation>
</comment>
<comment type="similarity">
    <text evidence="1">Belongs to the phosphoglycerate kinase family.</text>
</comment>
<keyword id="KW-0067">ATP-binding</keyword>
<keyword id="KW-0963">Cytoplasm</keyword>
<keyword id="KW-0324">Glycolysis</keyword>
<keyword id="KW-0418">Kinase</keyword>
<keyword id="KW-0547">Nucleotide-binding</keyword>
<keyword id="KW-0808">Transferase</keyword>
<gene>
    <name evidence="1" type="primary">pgk</name>
    <name type="ordered locus">SGR_5574</name>
</gene>
<proteinExistence type="inferred from homology"/>
<evidence type="ECO:0000255" key="1">
    <source>
        <dbReference type="HAMAP-Rule" id="MF_00145"/>
    </source>
</evidence>
<dbReference type="EC" id="2.7.2.3" evidence="1"/>
<dbReference type="EMBL" id="AP009493">
    <property type="protein sequence ID" value="BAG22403.1"/>
    <property type="molecule type" value="Genomic_DNA"/>
</dbReference>
<dbReference type="RefSeq" id="WP_012381400.1">
    <property type="nucleotide sequence ID" value="NC_010572.1"/>
</dbReference>
<dbReference type="SMR" id="B1W0Z3"/>
<dbReference type="KEGG" id="sgr:SGR_5574"/>
<dbReference type="PATRIC" id="fig|455632.4.peg.5709"/>
<dbReference type="eggNOG" id="COG0126">
    <property type="taxonomic scope" value="Bacteria"/>
</dbReference>
<dbReference type="HOGENOM" id="CLU_025427_0_2_11"/>
<dbReference type="UniPathway" id="UPA00109">
    <property type="reaction ID" value="UER00185"/>
</dbReference>
<dbReference type="Proteomes" id="UP000001685">
    <property type="component" value="Chromosome"/>
</dbReference>
<dbReference type="GO" id="GO:0005829">
    <property type="term" value="C:cytosol"/>
    <property type="evidence" value="ECO:0007669"/>
    <property type="project" value="TreeGrafter"/>
</dbReference>
<dbReference type="GO" id="GO:0043531">
    <property type="term" value="F:ADP binding"/>
    <property type="evidence" value="ECO:0007669"/>
    <property type="project" value="TreeGrafter"/>
</dbReference>
<dbReference type="GO" id="GO:0005524">
    <property type="term" value="F:ATP binding"/>
    <property type="evidence" value="ECO:0007669"/>
    <property type="project" value="UniProtKB-KW"/>
</dbReference>
<dbReference type="GO" id="GO:0004618">
    <property type="term" value="F:phosphoglycerate kinase activity"/>
    <property type="evidence" value="ECO:0007669"/>
    <property type="project" value="UniProtKB-UniRule"/>
</dbReference>
<dbReference type="GO" id="GO:0006094">
    <property type="term" value="P:gluconeogenesis"/>
    <property type="evidence" value="ECO:0007669"/>
    <property type="project" value="TreeGrafter"/>
</dbReference>
<dbReference type="GO" id="GO:0006096">
    <property type="term" value="P:glycolytic process"/>
    <property type="evidence" value="ECO:0007669"/>
    <property type="project" value="UniProtKB-UniRule"/>
</dbReference>
<dbReference type="FunFam" id="3.40.50.1260:FF:000006">
    <property type="entry name" value="Phosphoglycerate kinase"/>
    <property type="match status" value="1"/>
</dbReference>
<dbReference type="FunFam" id="3.40.50.1260:FF:000031">
    <property type="entry name" value="Phosphoglycerate kinase 1"/>
    <property type="match status" value="1"/>
</dbReference>
<dbReference type="Gene3D" id="3.40.50.1260">
    <property type="entry name" value="Phosphoglycerate kinase, N-terminal domain"/>
    <property type="match status" value="2"/>
</dbReference>
<dbReference type="HAMAP" id="MF_00145">
    <property type="entry name" value="Phosphoglyc_kinase"/>
    <property type="match status" value="1"/>
</dbReference>
<dbReference type="InterPro" id="IPR001576">
    <property type="entry name" value="Phosphoglycerate_kinase"/>
</dbReference>
<dbReference type="InterPro" id="IPR015911">
    <property type="entry name" value="Phosphoglycerate_kinase_CS"/>
</dbReference>
<dbReference type="InterPro" id="IPR015824">
    <property type="entry name" value="Phosphoglycerate_kinase_N"/>
</dbReference>
<dbReference type="InterPro" id="IPR036043">
    <property type="entry name" value="Phosphoglycerate_kinase_sf"/>
</dbReference>
<dbReference type="PANTHER" id="PTHR11406">
    <property type="entry name" value="PHOSPHOGLYCERATE KINASE"/>
    <property type="match status" value="1"/>
</dbReference>
<dbReference type="PANTHER" id="PTHR11406:SF23">
    <property type="entry name" value="PHOSPHOGLYCERATE KINASE 1, CHLOROPLASTIC-RELATED"/>
    <property type="match status" value="1"/>
</dbReference>
<dbReference type="Pfam" id="PF00162">
    <property type="entry name" value="PGK"/>
    <property type="match status" value="1"/>
</dbReference>
<dbReference type="PIRSF" id="PIRSF000724">
    <property type="entry name" value="Pgk"/>
    <property type="match status" value="1"/>
</dbReference>
<dbReference type="PRINTS" id="PR00477">
    <property type="entry name" value="PHGLYCKINASE"/>
</dbReference>
<dbReference type="SUPFAM" id="SSF53748">
    <property type="entry name" value="Phosphoglycerate kinase"/>
    <property type="match status" value="1"/>
</dbReference>
<dbReference type="PROSITE" id="PS00111">
    <property type="entry name" value="PGLYCERATE_KINASE"/>
    <property type="match status" value="1"/>
</dbReference>
<reference key="1">
    <citation type="journal article" date="2008" name="J. Bacteriol.">
        <title>Genome sequence of the streptomycin-producing microorganism Streptomyces griseus IFO 13350.</title>
        <authorList>
            <person name="Ohnishi Y."/>
            <person name="Ishikawa J."/>
            <person name="Hara H."/>
            <person name="Suzuki H."/>
            <person name="Ikenoya M."/>
            <person name="Ikeda H."/>
            <person name="Yamashita A."/>
            <person name="Hattori M."/>
            <person name="Horinouchi S."/>
        </authorList>
    </citation>
    <scope>NUCLEOTIDE SEQUENCE [LARGE SCALE GENOMIC DNA]</scope>
    <source>
        <strain>JCM 4626 / CBS 651.72 / NBRC 13350 / KCC S-0626 / ISP 5235</strain>
    </source>
</reference>
<protein>
    <recommendedName>
        <fullName evidence="1">Phosphoglycerate kinase</fullName>
        <ecNumber evidence="1">2.7.2.3</ecNumber>
    </recommendedName>
</protein>
<sequence>MKTIDELLAEGVAGKRVFVRADLNVPLDGTTITDDGRIRAVVPTIAKLAEAGARVVVASHLGRPKGAPDPAFSLAPAATRLGELLGAEVAFAADTVGESARAAVAGLADGRVAVVENLRFNAGETSKDDAERGAFADQLAQLADVYVGDGFGAVHRKHASVFDLPARLPHYAGYLIATEVGVLKKLTTDVHRPYAVVLGGAKVSDKLGVIDHLLERADRILIGGGMAYTFLKAKGYEVGSSLLQEDQIPAVREYLRRAEEKGVEFVLPVDVVVAPSFPDLKTKAPAHPTTVAADAMPAGQMGLDNGPETNKLYASKLADAATVFWNGPMGVFEHPDFADGTRAVAQALVDSSAFSVVGGGDSAAAVRILGFDENAFGHISTGGGASLEYLEGKTLPGLAALED</sequence>